<evidence type="ECO:0000250" key="1">
    <source>
        <dbReference type="UniProtKB" id="O55143"/>
    </source>
</evidence>
<evidence type="ECO:0000250" key="2">
    <source>
        <dbReference type="UniProtKB" id="P04191"/>
    </source>
</evidence>
<evidence type="ECO:0000250" key="3">
    <source>
        <dbReference type="UniProtKB" id="P11607"/>
    </source>
</evidence>
<evidence type="ECO:0000250" key="4">
    <source>
        <dbReference type="UniProtKB" id="P16615"/>
    </source>
</evidence>
<evidence type="ECO:0000250" key="5">
    <source>
        <dbReference type="UniProtKB" id="Q8R429"/>
    </source>
</evidence>
<evidence type="ECO:0000255" key="6"/>
<evidence type="ECO:0000303" key="7">
    <source>
    </source>
</evidence>
<evidence type="ECO:0000305" key="8"/>
<keyword id="KW-0025">Alternative splicing</keyword>
<keyword id="KW-0067">ATP-binding</keyword>
<keyword id="KW-0106">Calcium</keyword>
<keyword id="KW-0109">Calcium transport</keyword>
<keyword id="KW-1015">Disulfide bond</keyword>
<keyword id="KW-0256">Endoplasmic reticulum</keyword>
<keyword id="KW-0406">Ion transport</keyword>
<keyword id="KW-0460">Magnesium</keyword>
<keyword id="KW-0472">Membrane</keyword>
<keyword id="KW-0479">Metal-binding</keyword>
<keyword id="KW-0547">Nucleotide-binding</keyword>
<keyword id="KW-0597">Phosphoprotein</keyword>
<keyword id="KW-1185">Reference proteome</keyword>
<keyword id="KW-0703">Sarcoplasmic reticulum</keyword>
<keyword id="KW-1278">Translocase</keyword>
<keyword id="KW-0812">Transmembrane</keyword>
<keyword id="KW-1133">Transmembrane helix</keyword>
<keyword id="KW-0813">Transport</keyword>
<protein>
    <recommendedName>
        <fullName>Sarcoplasmic/endoplasmic reticulum calcium ATPase 2</fullName>
        <shortName>SERCA2</shortName>
        <shortName>SR Ca(2+)-ATPase 2</shortName>
        <ecNumber>7.2.2.10</ecNumber>
    </recommendedName>
    <alternativeName>
        <fullName>Calcium pump 2</fullName>
    </alternativeName>
    <alternativeName>
        <fullName>Calcium-transporting ATPase sarcoplasmic reticulum type, slow twitch skeletal muscle isoform</fullName>
    </alternativeName>
    <alternativeName>
        <fullName>Endoplasmic reticulum class 1/2 Ca(2+) ATPase</fullName>
    </alternativeName>
</protein>
<gene>
    <name type="primary">ATP2A2</name>
</gene>
<sequence>MENAHTKTVEEVLAYFGVNESTGLSLEQVKKLKEKWGSNELPAEEGKTLLELVIEQFEDLLVRILLLAACISFVLAWFEEGEETITAFVEPFVILLILVANAIVGVWQERNAENAIEALKEYEPEMGKVYRQDRKSVQRIKARDIVPGDIVEVAVGDKVPADIRITSIKSTTLRVDQSILTGESVSVIKHTDPVPDPRAVNQDKKNMLFSGTNIAAGKAMGVVIATGVNTEIGKIRDEMVATEQERTPLQQKLDEFGEQLSKVISLICIAVWIINIGHFNDPVHGGSWIRGAIYYFKIAVALAVAAIPEGLPAVITTCLALGTRRMAKKNAIVRSLPSVETLGCTSVICSDKTGTLTTNQMSVCRMFILDKVEGDSCSLNEFTVTGSTYAPMGEVHKDDKLIKCSQYDGLVELATICALCNDSSLDYNEAKGVYEKVGEATETALTCLVEKMNVFDTDLKGLSRIERANACNSVIKQLMKKEFTLEFSRDRKSMSVYCTPNKPSRTSMSKMFVKGAPEGVIDRCTHVRVGNAKIPLSSGIKQKIMSVIREWGTGRDTLRCLALATHDNPPRKEEMNLEDSSNFINYETNLTFVGCVGMLDPPRIEVASSIKLCKQAGIRVIMITGDNKGTAVAICRRIGIFVEDEDVSTKAFTGREFDELSLAAQRDACHHARCFARVEPSHKSKIVEFLQSFDEITAMTGDGVNDAPALKKAEIGIAMGSGTAVAKTASEMVLADDNFSTIVAAVEEGRAIYNNMKQFIRYLISSNVGEVVCIFLTAALGFPEALIPVQLLWVNLVTDGLPATALGFNPPDLDIMNKPPRNPKEPLISGWLFFRYLAIGCYVGAATVGAAAWWFIAADGGPRVTFYQLSHFLQCKEDNPDFSGVDCVVFESPYPMTMALSVLVTIEMCNALNSLSENQSLMRMPPWENIWLVGAICLSMSLHFLILYVEPLPIIFQITPLNVTQWLMVLKISLPVILLDETLKYVARNYLEPGKDSVQPATKPCSLSACTEGVSWPFVFITLPLVIWLYSTDTNFSDMFW</sequence>
<proteinExistence type="evidence at transcript level"/>
<name>AT2A2_CHICK</name>
<organism>
    <name type="scientific">Gallus gallus</name>
    <name type="common">Chicken</name>
    <dbReference type="NCBI Taxonomy" id="9031"/>
    <lineage>
        <taxon>Eukaryota</taxon>
        <taxon>Metazoa</taxon>
        <taxon>Chordata</taxon>
        <taxon>Craniata</taxon>
        <taxon>Vertebrata</taxon>
        <taxon>Euteleostomi</taxon>
        <taxon>Archelosauria</taxon>
        <taxon>Archosauria</taxon>
        <taxon>Dinosauria</taxon>
        <taxon>Saurischia</taxon>
        <taxon>Theropoda</taxon>
        <taxon>Coelurosauria</taxon>
        <taxon>Aves</taxon>
        <taxon>Neognathae</taxon>
        <taxon>Galloanserae</taxon>
        <taxon>Galliformes</taxon>
        <taxon>Phasianidae</taxon>
        <taxon>Phasianinae</taxon>
        <taxon>Gallus</taxon>
    </lineage>
</organism>
<accession>Q03669</accession>
<dbReference type="EC" id="7.2.2.10"/>
<dbReference type="EMBL" id="M66385">
    <property type="protein sequence ID" value="AAA49066.1"/>
    <property type="molecule type" value="mRNA"/>
</dbReference>
<dbReference type="PIR" id="A40812">
    <property type="entry name" value="A40812"/>
</dbReference>
<dbReference type="RefSeq" id="NP_001258902.1">
    <molecule id="Q03669-2"/>
    <property type="nucleotide sequence ID" value="NM_001271973.2"/>
</dbReference>
<dbReference type="RefSeq" id="NP_001258903.1">
    <property type="nucleotide sequence ID" value="NM_001271974.1"/>
</dbReference>
<dbReference type="SMR" id="Q03669"/>
<dbReference type="FunCoup" id="Q03669">
    <property type="interactions" value="2430"/>
</dbReference>
<dbReference type="STRING" id="9031.ENSGALP00000059190"/>
<dbReference type="PaxDb" id="9031-ENSGALP00000038523"/>
<dbReference type="GeneID" id="396446"/>
<dbReference type="KEGG" id="gga:396446"/>
<dbReference type="CTD" id="488"/>
<dbReference type="VEuPathDB" id="HostDB:geneid_396446"/>
<dbReference type="eggNOG" id="KOG0202">
    <property type="taxonomic scope" value="Eukaryota"/>
</dbReference>
<dbReference type="HOGENOM" id="CLU_002360_3_2_1"/>
<dbReference type="InParanoid" id="Q03669"/>
<dbReference type="OMA" id="PLWNNMM"/>
<dbReference type="OrthoDB" id="3352408at2759"/>
<dbReference type="PhylomeDB" id="Q03669"/>
<dbReference type="TreeFam" id="TF300651"/>
<dbReference type="PRO" id="PR:Q03669"/>
<dbReference type="Proteomes" id="UP000000539">
    <property type="component" value="Unassembled WGS sequence"/>
</dbReference>
<dbReference type="GO" id="GO:0016020">
    <property type="term" value="C:membrane"/>
    <property type="evidence" value="ECO:0000318"/>
    <property type="project" value="GO_Central"/>
</dbReference>
<dbReference type="GO" id="GO:0033017">
    <property type="term" value="C:sarcoplasmic reticulum membrane"/>
    <property type="evidence" value="ECO:0007669"/>
    <property type="project" value="UniProtKB-SubCell"/>
</dbReference>
<dbReference type="GO" id="GO:0005524">
    <property type="term" value="F:ATP binding"/>
    <property type="evidence" value="ECO:0007669"/>
    <property type="project" value="UniProtKB-KW"/>
</dbReference>
<dbReference type="GO" id="GO:0016887">
    <property type="term" value="F:ATP hydrolysis activity"/>
    <property type="evidence" value="ECO:0007669"/>
    <property type="project" value="InterPro"/>
</dbReference>
<dbReference type="GO" id="GO:0046872">
    <property type="term" value="F:metal ion binding"/>
    <property type="evidence" value="ECO:0007669"/>
    <property type="project" value="UniProtKB-KW"/>
</dbReference>
<dbReference type="GO" id="GO:0005388">
    <property type="term" value="F:P-type calcium transporter activity"/>
    <property type="evidence" value="ECO:0000318"/>
    <property type="project" value="GO_Central"/>
</dbReference>
<dbReference type="GO" id="GO:0086039">
    <property type="term" value="F:P-type calcium transporter activity involved in regulation of cardiac muscle cell membrane potential"/>
    <property type="evidence" value="ECO:0000250"/>
    <property type="project" value="UniProtKB"/>
</dbReference>
<dbReference type="GO" id="GO:0000045">
    <property type="term" value="P:autophagosome assembly"/>
    <property type="evidence" value="ECO:0000250"/>
    <property type="project" value="UniProtKB"/>
</dbReference>
<dbReference type="GO" id="GO:0070588">
    <property type="term" value="P:calcium ion transmembrane transport"/>
    <property type="evidence" value="ECO:0000250"/>
    <property type="project" value="UniProtKB"/>
</dbReference>
<dbReference type="GO" id="GO:0006816">
    <property type="term" value="P:calcium ion transport"/>
    <property type="evidence" value="ECO:0000250"/>
    <property type="project" value="AgBase"/>
</dbReference>
<dbReference type="GO" id="GO:0006874">
    <property type="term" value="P:intracellular calcium ion homeostasis"/>
    <property type="evidence" value="ECO:0000318"/>
    <property type="project" value="GO_Central"/>
</dbReference>
<dbReference type="GO" id="GO:0010882">
    <property type="term" value="P:regulation of cardiac muscle contraction by calcium ion signaling"/>
    <property type="evidence" value="ECO:0000318"/>
    <property type="project" value="GO_Central"/>
</dbReference>
<dbReference type="GO" id="GO:0009410">
    <property type="term" value="P:response to xenobiotic stimulus"/>
    <property type="evidence" value="ECO:0000315"/>
    <property type="project" value="AgBase"/>
</dbReference>
<dbReference type="CDD" id="cd02083">
    <property type="entry name" value="P-type_ATPase_SERCA"/>
    <property type="match status" value="1"/>
</dbReference>
<dbReference type="FunFam" id="2.70.150.10:FF:000143">
    <property type="entry name" value="Calcium-transporting ATPase"/>
    <property type="match status" value="1"/>
</dbReference>
<dbReference type="FunFam" id="3.40.1110.10:FF:000003">
    <property type="entry name" value="Calcium-transporting ATPase"/>
    <property type="match status" value="1"/>
</dbReference>
<dbReference type="FunFam" id="3.40.50.1000:FF:000005">
    <property type="entry name" value="Calcium-transporting ATPase 1"/>
    <property type="match status" value="1"/>
</dbReference>
<dbReference type="FunFam" id="1.20.1110.10:FF:000065">
    <property type="entry name" value="Sarcoplasmic/endoplasmic reticulum calcium ATPase 1"/>
    <property type="match status" value="3"/>
</dbReference>
<dbReference type="Gene3D" id="3.40.1110.10">
    <property type="entry name" value="Calcium-transporting ATPase, cytoplasmic domain N"/>
    <property type="match status" value="1"/>
</dbReference>
<dbReference type="Gene3D" id="2.70.150.10">
    <property type="entry name" value="Calcium-transporting ATPase, cytoplasmic transduction domain A"/>
    <property type="match status" value="1"/>
</dbReference>
<dbReference type="Gene3D" id="1.20.1110.10">
    <property type="entry name" value="Calcium-transporting ATPase, transmembrane domain"/>
    <property type="match status" value="1"/>
</dbReference>
<dbReference type="Gene3D" id="3.40.50.1000">
    <property type="entry name" value="HAD superfamily/HAD-like"/>
    <property type="match status" value="1"/>
</dbReference>
<dbReference type="InterPro" id="IPR006068">
    <property type="entry name" value="ATPase_P-typ_cation-transptr_C"/>
</dbReference>
<dbReference type="InterPro" id="IPR004014">
    <property type="entry name" value="ATPase_P-typ_cation-transptr_N"/>
</dbReference>
<dbReference type="InterPro" id="IPR023299">
    <property type="entry name" value="ATPase_P-typ_cyto_dom_N"/>
</dbReference>
<dbReference type="InterPro" id="IPR018303">
    <property type="entry name" value="ATPase_P-typ_P_site"/>
</dbReference>
<dbReference type="InterPro" id="IPR023298">
    <property type="entry name" value="ATPase_P-typ_TM_dom_sf"/>
</dbReference>
<dbReference type="InterPro" id="IPR008250">
    <property type="entry name" value="ATPase_P-typ_transduc_dom_A_sf"/>
</dbReference>
<dbReference type="InterPro" id="IPR036412">
    <property type="entry name" value="HAD-like_sf"/>
</dbReference>
<dbReference type="InterPro" id="IPR023214">
    <property type="entry name" value="HAD_sf"/>
</dbReference>
<dbReference type="InterPro" id="IPR005782">
    <property type="entry name" value="P-type_ATPase_IIA"/>
</dbReference>
<dbReference type="InterPro" id="IPR001757">
    <property type="entry name" value="P_typ_ATPase"/>
</dbReference>
<dbReference type="InterPro" id="IPR044492">
    <property type="entry name" value="P_typ_ATPase_HD_dom"/>
</dbReference>
<dbReference type="NCBIfam" id="TIGR01116">
    <property type="entry name" value="ATPase-IIA1_Ca"/>
    <property type="match status" value="1"/>
</dbReference>
<dbReference type="NCBIfam" id="TIGR01494">
    <property type="entry name" value="ATPase_P-type"/>
    <property type="match status" value="2"/>
</dbReference>
<dbReference type="PANTHER" id="PTHR42861">
    <property type="entry name" value="CALCIUM-TRANSPORTING ATPASE"/>
    <property type="match status" value="1"/>
</dbReference>
<dbReference type="Pfam" id="PF13246">
    <property type="entry name" value="Cation_ATPase"/>
    <property type="match status" value="1"/>
</dbReference>
<dbReference type="Pfam" id="PF00689">
    <property type="entry name" value="Cation_ATPase_C"/>
    <property type="match status" value="1"/>
</dbReference>
<dbReference type="Pfam" id="PF00690">
    <property type="entry name" value="Cation_ATPase_N"/>
    <property type="match status" value="1"/>
</dbReference>
<dbReference type="Pfam" id="PF00122">
    <property type="entry name" value="E1-E2_ATPase"/>
    <property type="match status" value="1"/>
</dbReference>
<dbReference type="Pfam" id="PF00702">
    <property type="entry name" value="Hydrolase"/>
    <property type="match status" value="1"/>
</dbReference>
<dbReference type="PRINTS" id="PR00119">
    <property type="entry name" value="CATATPASE"/>
</dbReference>
<dbReference type="PRINTS" id="PR00120">
    <property type="entry name" value="HATPASE"/>
</dbReference>
<dbReference type="SFLD" id="SFLDG00002">
    <property type="entry name" value="C1.7:_P-type_atpase_like"/>
    <property type="match status" value="1"/>
</dbReference>
<dbReference type="SFLD" id="SFLDF00027">
    <property type="entry name" value="p-type_atpase"/>
    <property type="match status" value="1"/>
</dbReference>
<dbReference type="SMART" id="SM00831">
    <property type="entry name" value="Cation_ATPase_N"/>
    <property type="match status" value="1"/>
</dbReference>
<dbReference type="SUPFAM" id="SSF81653">
    <property type="entry name" value="Calcium ATPase, transduction domain A"/>
    <property type="match status" value="1"/>
</dbReference>
<dbReference type="SUPFAM" id="SSF81665">
    <property type="entry name" value="Calcium ATPase, transmembrane domain M"/>
    <property type="match status" value="1"/>
</dbReference>
<dbReference type="SUPFAM" id="SSF56784">
    <property type="entry name" value="HAD-like"/>
    <property type="match status" value="1"/>
</dbReference>
<dbReference type="SUPFAM" id="SSF81660">
    <property type="entry name" value="Metal cation-transporting ATPase, ATP-binding domain N"/>
    <property type="match status" value="1"/>
</dbReference>
<dbReference type="PROSITE" id="PS00154">
    <property type="entry name" value="ATPASE_E1_E2"/>
    <property type="match status" value="1"/>
</dbReference>
<reference key="1">
    <citation type="journal article" date="1991" name="J. Biol. Chem.">
        <title>Nucleotide sequences of avian cardiac and brain SR/ER Ca(2+)-ATPases and functional comparisons with fast twitch Ca(2+)-ATPase. Calcium affinities and inhibitor effects.</title>
        <authorList>
            <person name="Campbell A.M."/>
            <person name="Kessler P.D."/>
            <person name="Sagara Y."/>
            <person name="Inesi G."/>
            <person name="Fambrough D.M."/>
        </authorList>
    </citation>
    <scope>NUCLEOTIDE SEQUENCE [MRNA] (ISOFORMS 1 AND 2)</scope>
    <source>
        <strain>White leghorn</strain>
    </source>
</reference>
<comment type="function">
    <text evidence="1">This magnesium-dependent enzyme catalyzes the hydrolysis of ATP coupled with the translocation of calcium from the cytosol to the sarcoplasmic reticulum lumen. Isoform SERCA2A is involved in the regulation of the contraction/relaxation cycle. May act as a regulator of TNFSF11-mediated Ca(2+) signaling during osteoclastogenesis.</text>
</comment>
<comment type="catalytic activity">
    <reaction>
        <text>Ca(2+)(in) + ATP + H2O = Ca(2+)(out) + ADP + phosphate + H(+)</text>
        <dbReference type="Rhea" id="RHEA:18105"/>
        <dbReference type="ChEBI" id="CHEBI:15377"/>
        <dbReference type="ChEBI" id="CHEBI:15378"/>
        <dbReference type="ChEBI" id="CHEBI:29108"/>
        <dbReference type="ChEBI" id="CHEBI:30616"/>
        <dbReference type="ChEBI" id="CHEBI:43474"/>
        <dbReference type="ChEBI" id="CHEBI:456216"/>
        <dbReference type="EC" id="7.2.2.10"/>
    </reaction>
</comment>
<comment type="cofactor">
    <cofactor evidence="3">
        <name>Mg(2+)</name>
        <dbReference type="ChEBI" id="CHEBI:18420"/>
    </cofactor>
</comment>
<comment type="activity regulation">
    <text evidence="1 2 5">Reversibly inhibited by phospholamban (PLN) at low calcium concentrations (By similarity). Inhibited by sarcolipin (SLN) and myoregulin (MRLN) (By similarity). Enhanced by DWORF; DWORF increases activity by displacing sarcolipin (SLN), phospholamban (PLN) and myoregulin (MRLN) (By similarity).</text>
</comment>
<comment type="subunit">
    <text evidence="1 2 4 5">Interacts with sarcolipin (SLN) (By similarity). Interacts with phospholamban (PLN) (By similarity). Interacts with myoregulin (MRLN). Interacts with DWORF (By similarity). Interacts with TMX2.</text>
</comment>
<comment type="subcellular location">
    <subcellularLocation>
        <location evidence="1">Endoplasmic reticulum membrane</location>
        <topology evidence="6">Multi-pass membrane protein</topology>
    </subcellularLocation>
    <subcellularLocation>
        <location evidence="1">Sarcoplasmic reticulum membrane</location>
        <topology evidence="6">Multi-pass membrane protein</topology>
    </subcellularLocation>
</comment>
<comment type="alternative products">
    <event type="alternative splicing"/>
    <isoform>
        <id>Q03669-1</id>
        <name>1</name>
        <name>ATP2A2B</name>
        <name>SERCA2B</name>
        <sequence type="displayed"/>
    </isoform>
    <isoform>
        <id>Q03669-2</id>
        <name>2</name>
        <name>ATP2A2A</name>
        <name>SERCA2a</name>
        <sequence type="described" ref="VSP_000363"/>
    </isoform>
</comment>
<comment type="tissue specificity">
    <text>Only isoform 2 is detected in heart, while both isoforms are expressed in brain, with isoform 2 being predominant.</text>
</comment>
<comment type="domain">
    <text evidence="2">Ca(2+) and ATP binding cause major rearrangements of the cytoplasmic and transmembrane domains. According to the E1-E2 model, Ca(2+) binding to the cytosolic domain of the pump in the high-affinity E1 conformation is followed by the ATP-dependent phosphorylation of the active site Asp, giving rise to E1P. A conformational change of the phosphoenzyme gives rise to the low-affinity E2P state that exposes the Ca(2+) ions to the lumenal side and promotes Ca(2+) release. Dephosphorylation of the active site Asp mediates the subsequent return to the E1 conformation.</text>
</comment>
<comment type="domain">
    <text evidence="2">PLN and SLN both have a single transmembrane helix; both occupy a similar binding site that is situated between the ATP2A2 transmembrane helices.</text>
</comment>
<comment type="similarity">
    <text evidence="8">Belongs to the cation transport ATPase (P-type) (TC 3.A.3) family. Type IIA subfamily.</text>
</comment>
<feature type="chain" id="PRO_0000046201" description="Sarcoplasmic/endoplasmic reticulum calcium ATPase 2">
    <location>
        <begin position="1"/>
        <end position="1041"/>
    </location>
</feature>
<feature type="topological domain" description="Cytoplasmic" evidence="8">
    <location>
        <begin position="1"/>
        <end position="48"/>
    </location>
</feature>
<feature type="transmembrane region" description="Helical; Name=1" evidence="2">
    <location>
        <begin position="49"/>
        <end position="69"/>
    </location>
</feature>
<feature type="topological domain" description="Lumenal" evidence="8">
    <location>
        <begin position="70"/>
        <end position="89"/>
    </location>
</feature>
<feature type="transmembrane region" description="Helical; Name=2" evidence="2">
    <location>
        <begin position="90"/>
        <end position="110"/>
    </location>
</feature>
<feature type="topological domain" description="Cytoplasmic" evidence="8">
    <location>
        <begin position="111"/>
        <end position="253"/>
    </location>
</feature>
<feature type="transmembrane region" description="Helical; Name=3" evidence="2">
    <location>
        <begin position="254"/>
        <end position="273"/>
    </location>
</feature>
<feature type="topological domain" description="Lumenal" evidence="8">
    <location>
        <begin position="274"/>
        <end position="295"/>
    </location>
</feature>
<feature type="transmembrane region" description="Helical; Name=4" evidence="2">
    <location>
        <begin position="296"/>
        <end position="313"/>
    </location>
</feature>
<feature type="topological domain" description="Cytoplasmic" evidence="8">
    <location>
        <begin position="314"/>
        <end position="756"/>
    </location>
</feature>
<feature type="transmembrane region" description="Helical; Name=5" evidence="2">
    <location>
        <begin position="757"/>
        <end position="776"/>
    </location>
</feature>
<feature type="topological domain" description="Lumenal" evidence="8">
    <location>
        <begin position="777"/>
        <end position="786"/>
    </location>
</feature>
<feature type="transmembrane region" description="Helical; Name=6" evidence="2">
    <location>
        <begin position="787"/>
        <end position="807"/>
    </location>
</feature>
<feature type="topological domain" description="Cytoplasmic" evidence="8">
    <location>
        <begin position="808"/>
        <end position="827"/>
    </location>
</feature>
<feature type="transmembrane region" description="Helical; Name=7" evidence="2">
    <location>
        <begin position="828"/>
        <end position="850"/>
    </location>
</feature>
<feature type="topological domain" description="Lumenal" evidence="8">
    <location>
        <begin position="851"/>
        <end position="896"/>
    </location>
</feature>
<feature type="transmembrane region" description="Helical; Name=8" evidence="2">
    <location>
        <begin position="897"/>
        <end position="916"/>
    </location>
</feature>
<feature type="topological domain" description="Cytoplasmic" evidence="8">
    <location>
        <begin position="917"/>
        <end position="929"/>
    </location>
</feature>
<feature type="transmembrane region" description="Helical; Name=9" evidence="2">
    <location>
        <begin position="930"/>
        <end position="948"/>
    </location>
</feature>
<feature type="topological domain" description="Lumenal" evidence="8">
    <location>
        <begin position="949"/>
        <end position="963"/>
    </location>
</feature>
<feature type="transmembrane region" description="Helical; Name=10" evidence="2">
    <location>
        <begin position="964"/>
        <end position="984"/>
    </location>
</feature>
<feature type="topological domain" description="Cytoplasmic" evidence="8">
    <location>
        <begin position="985"/>
        <end position="1041"/>
    </location>
</feature>
<feature type="region of interest" description="Interaction with PLN" evidence="2">
    <location>
        <begin position="787"/>
        <end position="807"/>
    </location>
</feature>
<feature type="region of interest" description="Interaction with PLN" evidence="2">
    <location>
        <begin position="931"/>
        <end position="942"/>
    </location>
</feature>
<feature type="active site" description="4-aspartylphosphate intermediate" evidence="2">
    <location>
        <position position="351"/>
    </location>
</feature>
<feature type="binding site" evidence="3">
    <location>
        <position position="304"/>
    </location>
    <ligand>
        <name>Ca(2+)</name>
        <dbReference type="ChEBI" id="CHEBI:29108"/>
        <label>1</label>
    </ligand>
</feature>
<feature type="binding site" evidence="3">
    <location>
        <position position="305"/>
    </location>
    <ligand>
        <name>Ca(2+)</name>
        <dbReference type="ChEBI" id="CHEBI:29108"/>
        <label>1</label>
    </ligand>
</feature>
<feature type="binding site" evidence="3">
    <location>
        <position position="307"/>
    </location>
    <ligand>
        <name>Ca(2+)</name>
        <dbReference type="ChEBI" id="CHEBI:29108"/>
        <label>1</label>
    </ligand>
</feature>
<feature type="binding site" evidence="3">
    <location>
        <position position="309"/>
    </location>
    <ligand>
        <name>Ca(2+)</name>
        <dbReference type="ChEBI" id="CHEBI:29108"/>
        <label>1</label>
    </ligand>
</feature>
<feature type="binding site" evidence="3">
    <location>
        <position position="351"/>
    </location>
    <ligand>
        <name>Mg(2+)</name>
        <dbReference type="ChEBI" id="CHEBI:18420"/>
    </ligand>
</feature>
<feature type="binding site" evidence="3">
    <location>
        <position position="353"/>
    </location>
    <ligand>
        <name>ATP</name>
        <dbReference type="ChEBI" id="CHEBI:30616"/>
    </ligand>
</feature>
<feature type="binding site" evidence="3">
    <location>
        <position position="353"/>
    </location>
    <ligand>
        <name>Mg(2+)</name>
        <dbReference type="ChEBI" id="CHEBI:18420"/>
    </ligand>
</feature>
<feature type="binding site" evidence="3">
    <location>
        <position position="442"/>
    </location>
    <ligand>
        <name>ATP</name>
        <dbReference type="ChEBI" id="CHEBI:30616"/>
    </ligand>
</feature>
<feature type="binding site" evidence="3">
    <location>
        <position position="489"/>
    </location>
    <ligand>
        <name>ATP</name>
        <dbReference type="ChEBI" id="CHEBI:30616"/>
    </ligand>
</feature>
<feature type="binding site" evidence="3">
    <location>
        <position position="514"/>
    </location>
    <ligand>
        <name>ATP</name>
        <dbReference type="ChEBI" id="CHEBI:30616"/>
    </ligand>
</feature>
<feature type="binding site" evidence="2">
    <location>
        <position position="559"/>
    </location>
    <ligand>
        <name>ATP</name>
        <dbReference type="ChEBI" id="CHEBI:30616"/>
    </ligand>
</feature>
<feature type="binding site" evidence="2">
    <location>
        <position position="624"/>
    </location>
    <ligand>
        <name>ATP</name>
        <dbReference type="ChEBI" id="CHEBI:30616"/>
    </ligand>
</feature>
<feature type="binding site" evidence="2">
    <location>
        <position position="625"/>
    </location>
    <ligand>
        <name>ATP</name>
        <dbReference type="ChEBI" id="CHEBI:30616"/>
    </ligand>
</feature>
<feature type="binding site" evidence="3">
    <location>
        <position position="626"/>
    </location>
    <ligand>
        <name>ATP</name>
        <dbReference type="ChEBI" id="CHEBI:30616"/>
    </ligand>
</feature>
<feature type="binding site" evidence="3">
    <location>
        <position position="677"/>
    </location>
    <ligand>
        <name>ATP</name>
        <dbReference type="ChEBI" id="CHEBI:30616"/>
    </ligand>
</feature>
<feature type="binding site" evidence="2">
    <location>
        <position position="683"/>
    </location>
    <ligand>
        <name>ATP</name>
        <dbReference type="ChEBI" id="CHEBI:30616"/>
    </ligand>
</feature>
<feature type="binding site" evidence="3">
    <location>
        <position position="702"/>
    </location>
    <ligand>
        <name>Mg(2+)</name>
        <dbReference type="ChEBI" id="CHEBI:18420"/>
    </ligand>
</feature>
<feature type="binding site" evidence="3">
    <location>
        <position position="705"/>
    </location>
    <ligand>
        <name>ATP</name>
        <dbReference type="ChEBI" id="CHEBI:30616"/>
    </ligand>
</feature>
<feature type="binding site" evidence="3">
    <location>
        <position position="767"/>
    </location>
    <ligand>
        <name>Ca(2+)</name>
        <dbReference type="ChEBI" id="CHEBI:29108"/>
        <label>2</label>
    </ligand>
</feature>
<feature type="binding site" evidence="3">
    <location>
        <position position="770"/>
    </location>
    <ligand>
        <name>Ca(2+)</name>
        <dbReference type="ChEBI" id="CHEBI:29108"/>
        <label>2</label>
    </ligand>
</feature>
<feature type="binding site" evidence="3">
    <location>
        <position position="795"/>
    </location>
    <ligand>
        <name>Ca(2+)</name>
        <dbReference type="ChEBI" id="CHEBI:29108"/>
        <label>1</label>
    </ligand>
</feature>
<feature type="binding site" evidence="3">
    <location>
        <position position="798"/>
    </location>
    <ligand>
        <name>Ca(2+)</name>
        <dbReference type="ChEBI" id="CHEBI:29108"/>
        <label>2</label>
    </ligand>
</feature>
<feature type="binding site" evidence="3">
    <location>
        <position position="799"/>
    </location>
    <ligand>
        <name>Ca(2+)</name>
        <dbReference type="ChEBI" id="CHEBI:29108"/>
        <label>1</label>
    </ligand>
</feature>
<feature type="binding site" evidence="3">
    <location>
        <position position="799"/>
    </location>
    <ligand>
        <name>Ca(2+)</name>
        <dbReference type="ChEBI" id="CHEBI:29108"/>
        <label>2</label>
    </ligand>
</feature>
<feature type="binding site" evidence="2">
    <location>
        <position position="907"/>
    </location>
    <ligand>
        <name>Ca(2+)</name>
        <dbReference type="ChEBI" id="CHEBI:29108"/>
        <label>2</label>
    </ligand>
</feature>
<feature type="disulfide bond" evidence="3">
    <location>
        <begin position="875"/>
        <end position="887"/>
    </location>
</feature>
<feature type="splice variant" id="VSP_000363" description="In isoform 2." evidence="7">
    <original>GKDSVQPATKPCSLSACTEGVSWPFVFITLPLVIWLYSTDTNFSDMFW</original>
    <variation>AILE</variation>
    <location>
        <begin position="994"/>
        <end position="1041"/>
    </location>
</feature>